<accession>Q7Z1K9</accession>
<proteinExistence type="evidence at transcript level"/>
<feature type="signal peptide" evidence="1">
    <location>
        <begin position="1"/>
        <end position="19"/>
    </location>
</feature>
<feature type="chain" id="PRO_0000035267" description="Toxin Cll3">
    <location>
        <begin position="20"/>
        <end position="85"/>
    </location>
</feature>
<feature type="domain" description="LCN-type CS-alpha/beta" evidence="2">
    <location>
        <begin position="20"/>
        <end position="85"/>
    </location>
</feature>
<feature type="modified residue" description="Tyrosine amide" evidence="1">
    <location>
        <position position="85"/>
    </location>
</feature>
<feature type="disulfide bond" evidence="2">
    <location>
        <begin position="31"/>
        <end position="84"/>
    </location>
</feature>
<feature type="disulfide bond" evidence="2">
    <location>
        <begin position="35"/>
        <end position="60"/>
    </location>
</feature>
<feature type="disulfide bond" evidence="2">
    <location>
        <begin position="44"/>
        <end position="65"/>
    </location>
</feature>
<feature type="disulfide bond" evidence="2">
    <location>
        <begin position="48"/>
        <end position="67"/>
    </location>
</feature>
<keyword id="KW-0027">Amidation</keyword>
<keyword id="KW-1015">Disulfide bond</keyword>
<keyword id="KW-0872">Ion channel impairing toxin</keyword>
<keyword id="KW-0528">Neurotoxin</keyword>
<keyword id="KW-0964">Secreted</keyword>
<keyword id="KW-0732">Signal</keyword>
<keyword id="KW-0800">Toxin</keyword>
<keyword id="KW-0738">Voltage-gated sodium channel impairing toxin</keyword>
<name>SCX3_CENLI</name>
<evidence type="ECO:0000250" key="1"/>
<evidence type="ECO:0000255" key="2">
    <source>
        <dbReference type="PROSITE-ProRule" id="PRU01210"/>
    </source>
</evidence>
<evidence type="ECO:0000305" key="3"/>
<comment type="function">
    <text evidence="1">Beta toxins bind voltage-independently at site-4 of sodium channels (Nav) and shift the voltage of activation toward more negative potentials thereby affecting sodium channel activation and promoting spontaneous and repetitive firing.</text>
</comment>
<comment type="subcellular location">
    <subcellularLocation>
        <location evidence="1">Secreted</location>
    </subcellularLocation>
</comment>
<comment type="tissue specificity">
    <text>Expressed by the venom gland.</text>
</comment>
<comment type="domain">
    <text evidence="3">Has the structural arrangement of an alpha-helix connected to antiparallel beta-sheets by disulfide bonds (CS-alpha/beta).</text>
</comment>
<comment type="similarity">
    <text evidence="3">Belongs to the long (4 C-C) scorpion toxin superfamily. Sodium channel inhibitor family. Beta subfamily.</text>
</comment>
<reference key="1">
    <citation type="submission" date="2002-03" db="EMBL/GenBank/DDBJ databases">
        <title>Genes and peptides from the scorpion Centruroides limpidus limpidus, that recognize Na(+)-channels.</title>
        <authorList>
            <person name="Corona M."/>
            <person name="Possani L.D."/>
        </authorList>
    </citation>
    <scope>NUCLEOTIDE SEQUENCE [MRNA]</scope>
</reference>
<protein>
    <recommendedName>
        <fullName>Toxin Cll3</fullName>
    </recommendedName>
</protein>
<dbReference type="EMBL" id="AF491127">
    <property type="protein sequence ID" value="AAP49502.1"/>
    <property type="molecule type" value="mRNA"/>
</dbReference>
<dbReference type="SMR" id="Q7Z1K9"/>
<dbReference type="GO" id="GO:0005576">
    <property type="term" value="C:extracellular region"/>
    <property type="evidence" value="ECO:0007669"/>
    <property type="project" value="UniProtKB-SubCell"/>
</dbReference>
<dbReference type="GO" id="GO:0019871">
    <property type="term" value="F:sodium channel inhibitor activity"/>
    <property type="evidence" value="ECO:0007669"/>
    <property type="project" value="InterPro"/>
</dbReference>
<dbReference type="GO" id="GO:0090729">
    <property type="term" value="F:toxin activity"/>
    <property type="evidence" value="ECO:0007669"/>
    <property type="project" value="UniProtKB-KW"/>
</dbReference>
<dbReference type="GO" id="GO:0006952">
    <property type="term" value="P:defense response"/>
    <property type="evidence" value="ECO:0007669"/>
    <property type="project" value="InterPro"/>
</dbReference>
<dbReference type="CDD" id="cd23106">
    <property type="entry name" value="neurotoxins_LC_scorpion"/>
    <property type="match status" value="1"/>
</dbReference>
<dbReference type="Gene3D" id="3.30.30.10">
    <property type="entry name" value="Knottin, scorpion toxin-like"/>
    <property type="match status" value="1"/>
</dbReference>
<dbReference type="InterPro" id="IPR044062">
    <property type="entry name" value="LCN-type_CS_alpha_beta_dom"/>
</dbReference>
<dbReference type="InterPro" id="IPR003614">
    <property type="entry name" value="Scorpion_toxin-like"/>
</dbReference>
<dbReference type="InterPro" id="IPR036574">
    <property type="entry name" value="Scorpion_toxin-like_sf"/>
</dbReference>
<dbReference type="InterPro" id="IPR018218">
    <property type="entry name" value="Scorpion_toxinL"/>
</dbReference>
<dbReference type="PRINTS" id="PR00285">
    <property type="entry name" value="SCORPNTOXIN"/>
</dbReference>
<dbReference type="SMART" id="SM00505">
    <property type="entry name" value="Knot1"/>
    <property type="match status" value="1"/>
</dbReference>
<dbReference type="SUPFAM" id="SSF57095">
    <property type="entry name" value="Scorpion toxin-like"/>
    <property type="match status" value="1"/>
</dbReference>
<dbReference type="PROSITE" id="PS51863">
    <property type="entry name" value="LCN_CSAB"/>
    <property type="match status" value="1"/>
</dbReference>
<organism>
    <name type="scientific">Centruroides limpidus</name>
    <name type="common">Mexican scorpion</name>
    <dbReference type="NCBI Taxonomy" id="6876"/>
    <lineage>
        <taxon>Eukaryota</taxon>
        <taxon>Metazoa</taxon>
        <taxon>Ecdysozoa</taxon>
        <taxon>Arthropoda</taxon>
        <taxon>Chelicerata</taxon>
        <taxon>Arachnida</taxon>
        <taxon>Scorpiones</taxon>
        <taxon>Buthida</taxon>
        <taxon>Buthoidea</taxon>
        <taxon>Buthidae</taxon>
        <taxon>Centruroides</taxon>
    </lineage>
</organism>
<sequence>MNSLLMITACLAVIGTVWAKEGYIVNYYDGCKYACLKLGENDYCLRECKARYYKSAGGYCYAFACWCTHLYEQAVVWPLPNKTCYGK</sequence>